<keyword id="KW-0687">Ribonucleoprotein</keyword>
<keyword id="KW-0689">Ribosomal protein</keyword>
<accession>Q0TKY8</accession>
<feature type="chain" id="PRO_0000344679" description="Large ribosomal subunit protein bL36B">
    <location>
        <begin position="1"/>
        <end position="46"/>
    </location>
</feature>
<reference key="1">
    <citation type="journal article" date="2006" name="Mol. Microbiol.">
        <title>Role of pathogenicity island-associated integrases in the genome plasticity of uropathogenic Escherichia coli strain 536.</title>
        <authorList>
            <person name="Hochhut B."/>
            <person name="Wilde C."/>
            <person name="Balling G."/>
            <person name="Middendorf B."/>
            <person name="Dobrindt U."/>
            <person name="Brzuszkiewicz E."/>
            <person name="Gottschalk G."/>
            <person name="Carniel E."/>
            <person name="Hacker J."/>
        </authorList>
    </citation>
    <scope>NUCLEOTIDE SEQUENCE [LARGE SCALE GENOMIC DNA]</scope>
    <source>
        <strain>536 / UPEC</strain>
    </source>
</reference>
<name>RL362_ECOL5</name>
<organism>
    <name type="scientific">Escherichia coli O6:K15:H31 (strain 536 / UPEC)</name>
    <dbReference type="NCBI Taxonomy" id="362663"/>
    <lineage>
        <taxon>Bacteria</taxon>
        <taxon>Pseudomonadati</taxon>
        <taxon>Pseudomonadota</taxon>
        <taxon>Gammaproteobacteria</taxon>
        <taxon>Enterobacterales</taxon>
        <taxon>Enterobacteriaceae</taxon>
        <taxon>Escherichia</taxon>
    </lineage>
</organism>
<sequence length="46" mass="5467">MKVLNSLRTAKERHPDCQIVKRKGRLYVICKSNPRFKAVQGRKKKR</sequence>
<evidence type="ECO:0000255" key="1">
    <source>
        <dbReference type="HAMAP-Rule" id="MF_00251"/>
    </source>
</evidence>
<evidence type="ECO:0000305" key="2"/>
<comment type="similarity">
    <text evidence="1">Belongs to the bacterial ribosomal protein bL36 family.</text>
</comment>
<dbReference type="EMBL" id="CP000247">
    <property type="protein sequence ID" value="ABG68393.1"/>
    <property type="molecule type" value="Genomic_DNA"/>
</dbReference>
<dbReference type="SMR" id="Q0TKY8"/>
<dbReference type="KEGG" id="ecp:ECP_0359"/>
<dbReference type="HOGENOM" id="CLU_135723_3_1_6"/>
<dbReference type="Proteomes" id="UP000009182">
    <property type="component" value="Chromosome"/>
</dbReference>
<dbReference type="GO" id="GO:1990904">
    <property type="term" value="C:ribonucleoprotein complex"/>
    <property type="evidence" value="ECO:0007669"/>
    <property type="project" value="UniProtKB-KW"/>
</dbReference>
<dbReference type="GO" id="GO:0005840">
    <property type="term" value="C:ribosome"/>
    <property type="evidence" value="ECO:0007669"/>
    <property type="project" value="UniProtKB-KW"/>
</dbReference>
<dbReference type="GO" id="GO:0003735">
    <property type="term" value="F:structural constituent of ribosome"/>
    <property type="evidence" value="ECO:0007669"/>
    <property type="project" value="InterPro"/>
</dbReference>
<dbReference type="GO" id="GO:0006412">
    <property type="term" value="P:translation"/>
    <property type="evidence" value="ECO:0007669"/>
    <property type="project" value="UniProtKB-UniRule"/>
</dbReference>
<dbReference type="HAMAP" id="MF_00251">
    <property type="entry name" value="Ribosomal_bL36"/>
    <property type="match status" value="1"/>
</dbReference>
<dbReference type="InterPro" id="IPR000473">
    <property type="entry name" value="Ribosomal_bL36"/>
</dbReference>
<dbReference type="InterPro" id="IPR035977">
    <property type="entry name" value="Ribosomal_bL36_sp"/>
</dbReference>
<dbReference type="InterPro" id="IPR047621">
    <property type="entry name" value="Ribosomal_L36_bact"/>
</dbReference>
<dbReference type="NCBIfam" id="NF002021">
    <property type="entry name" value="PRK00831.1"/>
    <property type="match status" value="1"/>
</dbReference>
<dbReference type="NCBIfam" id="TIGR01022">
    <property type="entry name" value="rpmJ_bact"/>
    <property type="match status" value="1"/>
</dbReference>
<dbReference type="PANTHER" id="PTHR47781">
    <property type="entry name" value="50S RIBOSOMAL PROTEIN L36 2"/>
    <property type="match status" value="1"/>
</dbReference>
<dbReference type="PANTHER" id="PTHR47781:SF1">
    <property type="entry name" value="LARGE RIBOSOMAL SUBUNIT PROTEIN BL36B"/>
    <property type="match status" value="1"/>
</dbReference>
<dbReference type="Pfam" id="PF00444">
    <property type="entry name" value="Ribosomal_L36"/>
    <property type="match status" value="1"/>
</dbReference>
<dbReference type="SUPFAM" id="SSF57840">
    <property type="entry name" value="Ribosomal protein L36"/>
    <property type="match status" value="1"/>
</dbReference>
<dbReference type="PROSITE" id="PS00828">
    <property type="entry name" value="RIBOSOMAL_L36"/>
    <property type="match status" value="1"/>
</dbReference>
<protein>
    <recommendedName>
        <fullName evidence="1">Large ribosomal subunit protein bL36B</fullName>
    </recommendedName>
    <alternativeName>
        <fullName evidence="2">50S ribosomal protein L36 2</fullName>
    </alternativeName>
</protein>
<proteinExistence type="inferred from homology"/>
<gene>
    <name evidence="1" type="primary">rpmJ2</name>
    <name type="ordered locus">ECP_0359</name>
</gene>